<reference key="1">
    <citation type="journal article" date="1998" name="Curr. Biol.">
        <title>Mutations in fission yeast Cut15, an importin alpha homolog, lead to mitotic progression without chromosome condensation.</title>
        <authorList>
            <person name="Matsusaka T."/>
            <person name="Imamoto N."/>
            <person name="Yoneda Y."/>
            <person name="Yanagida M."/>
        </authorList>
    </citation>
    <scope>NUCLEOTIDE SEQUENCE [GENOMIC DNA]</scope>
    <scope>FUNCTION</scope>
    <scope>SUBCELLULAR LOCATION</scope>
</reference>
<reference key="2">
    <citation type="journal article" date="2002" name="Nature">
        <title>The genome sequence of Schizosaccharomyces pombe.</title>
        <authorList>
            <person name="Wood V."/>
            <person name="Gwilliam R."/>
            <person name="Rajandream M.A."/>
            <person name="Lyne M.H."/>
            <person name="Lyne R."/>
            <person name="Stewart A."/>
            <person name="Sgouros J.G."/>
            <person name="Peat N."/>
            <person name="Hayles J."/>
            <person name="Baker S.G."/>
            <person name="Basham D."/>
            <person name="Bowman S."/>
            <person name="Brooks K."/>
            <person name="Brown D."/>
            <person name="Brown S."/>
            <person name="Chillingworth T."/>
            <person name="Churcher C.M."/>
            <person name="Collins M."/>
            <person name="Connor R."/>
            <person name="Cronin A."/>
            <person name="Davis P."/>
            <person name="Feltwell T."/>
            <person name="Fraser A."/>
            <person name="Gentles S."/>
            <person name="Goble A."/>
            <person name="Hamlin N."/>
            <person name="Harris D.E."/>
            <person name="Hidalgo J."/>
            <person name="Hodgson G."/>
            <person name="Holroyd S."/>
            <person name="Hornsby T."/>
            <person name="Howarth S."/>
            <person name="Huckle E.J."/>
            <person name="Hunt S."/>
            <person name="Jagels K."/>
            <person name="James K.D."/>
            <person name="Jones L."/>
            <person name="Jones M."/>
            <person name="Leather S."/>
            <person name="McDonald S."/>
            <person name="McLean J."/>
            <person name="Mooney P."/>
            <person name="Moule S."/>
            <person name="Mungall K.L."/>
            <person name="Murphy L.D."/>
            <person name="Niblett D."/>
            <person name="Odell C."/>
            <person name="Oliver K."/>
            <person name="O'Neil S."/>
            <person name="Pearson D."/>
            <person name="Quail M.A."/>
            <person name="Rabbinowitsch E."/>
            <person name="Rutherford K.M."/>
            <person name="Rutter S."/>
            <person name="Saunders D."/>
            <person name="Seeger K."/>
            <person name="Sharp S."/>
            <person name="Skelton J."/>
            <person name="Simmonds M.N."/>
            <person name="Squares R."/>
            <person name="Squares S."/>
            <person name="Stevens K."/>
            <person name="Taylor K."/>
            <person name="Taylor R.G."/>
            <person name="Tivey A."/>
            <person name="Walsh S.V."/>
            <person name="Warren T."/>
            <person name="Whitehead S."/>
            <person name="Woodward J.R."/>
            <person name="Volckaert G."/>
            <person name="Aert R."/>
            <person name="Robben J."/>
            <person name="Grymonprez B."/>
            <person name="Weltjens I."/>
            <person name="Vanstreels E."/>
            <person name="Rieger M."/>
            <person name="Schaefer M."/>
            <person name="Mueller-Auer S."/>
            <person name="Gabel C."/>
            <person name="Fuchs M."/>
            <person name="Duesterhoeft A."/>
            <person name="Fritzc C."/>
            <person name="Holzer E."/>
            <person name="Moestl D."/>
            <person name="Hilbert H."/>
            <person name="Borzym K."/>
            <person name="Langer I."/>
            <person name="Beck A."/>
            <person name="Lehrach H."/>
            <person name="Reinhardt R."/>
            <person name="Pohl T.M."/>
            <person name="Eger P."/>
            <person name="Zimmermann W."/>
            <person name="Wedler H."/>
            <person name="Wambutt R."/>
            <person name="Purnelle B."/>
            <person name="Goffeau A."/>
            <person name="Cadieu E."/>
            <person name="Dreano S."/>
            <person name="Gloux S."/>
            <person name="Lelaure V."/>
            <person name="Mottier S."/>
            <person name="Galibert F."/>
            <person name="Aves S.J."/>
            <person name="Xiang Z."/>
            <person name="Hunt C."/>
            <person name="Moore K."/>
            <person name="Hurst S.M."/>
            <person name="Lucas M."/>
            <person name="Rochet M."/>
            <person name="Gaillardin C."/>
            <person name="Tallada V.A."/>
            <person name="Garzon A."/>
            <person name="Thode G."/>
            <person name="Daga R.R."/>
            <person name="Cruzado L."/>
            <person name="Jimenez J."/>
            <person name="Sanchez M."/>
            <person name="del Rey F."/>
            <person name="Benito J."/>
            <person name="Dominguez A."/>
            <person name="Revuelta J.L."/>
            <person name="Moreno S."/>
            <person name="Armstrong J."/>
            <person name="Forsburg S.L."/>
            <person name="Cerutti L."/>
            <person name="Lowe T."/>
            <person name="McCombie W.R."/>
            <person name="Paulsen I."/>
            <person name="Potashkin J."/>
            <person name="Shpakovski G.V."/>
            <person name="Ussery D."/>
            <person name="Barrell B.G."/>
            <person name="Nurse P."/>
        </authorList>
    </citation>
    <scope>NUCLEOTIDE SEQUENCE [LARGE SCALE GENOMIC DNA]</scope>
    <source>
        <strain>972 / ATCC 24843</strain>
    </source>
</reference>
<reference key="3">
    <citation type="journal article" date="2000" name="Genes Cells">
        <title>Large-scale screening of intracellular protein localization in living fission yeast cells by the use of a GFP-fusion genomic DNA library.</title>
        <authorList>
            <person name="Ding D.-Q."/>
            <person name="Tomita Y."/>
            <person name="Yamamoto A."/>
            <person name="Chikashige Y."/>
            <person name="Haraguchi T."/>
            <person name="Hiraoka Y."/>
        </authorList>
    </citation>
    <scope>NUCLEOTIDE SEQUENCE [LARGE SCALE GENOMIC DNA] OF 1-199</scope>
    <scope>SUBCELLULAR LOCATION</scope>
    <source>
        <strain>ATCC 38364 / 968</strain>
    </source>
</reference>
<reference key="4">
    <citation type="journal article" date="2005" name="Genetics">
        <title>The fission yeast Schizosaccharomyces pombe has two importin-alpha proteins, Imp1p and Cut15p, which have common and unique functions in nucleocytoplasmic transport and cell cycle progression.</title>
        <authorList>
            <person name="Umeda M."/>
            <person name="Izaddoost S."/>
            <person name="Cushman I."/>
            <person name="Moore M.S."/>
            <person name="Sazer S."/>
        </authorList>
    </citation>
    <scope>FUNCTION</scope>
    <scope>INTERACTION WITH PAP1</scope>
    <scope>SUBCELLULAR LOCATION</scope>
</reference>
<reference key="5">
    <citation type="journal article" date="2006" name="Nat. Biotechnol.">
        <title>ORFeome cloning and global analysis of protein localization in the fission yeast Schizosaccharomyces pombe.</title>
        <authorList>
            <person name="Matsuyama A."/>
            <person name="Arai R."/>
            <person name="Yashiroda Y."/>
            <person name="Shirai A."/>
            <person name="Kamata A."/>
            <person name="Sekido S."/>
            <person name="Kobayashi Y."/>
            <person name="Hashimoto A."/>
            <person name="Hamamoto M."/>
            <person name="Hiraoka Y."/>
            <person name="Horinouchi S."/>
            <person name="Yoshida M."/>
        </authorList>
    </citation>
    <scope>SUBCELLULAR LOCATION [LARGE SCALE ANALYSIS]</scope>
</reference>
<evidence type="ECO:0000255" key="1">
    <source>
        <dbReference type="PROSITE-ProRule" id="PRU00561"/>
    </source>
</evidence>
<evidence type="ECO:0000256" key="2">
    <source>
        <dbReference type="SAM" id="MobiDB-lite"/>
    </source>
</evidence>
<evidence type="ECO:0000269" key="3">
    <source>
    </source>
</evidence>
<evidence type="ECO:0000269" key="4">
    <source>
    </source>
</evidence>
<evidence type="ECO:0000269" key="5">
    <source>
    </source>
</evidence>
<evidence type="ECO:0000269" key="6">
    <source>
    </source>
</evidence>
<evidence type="ECO:0000305" key="7"/>
<protein>
    <recommendedName>
        <fullName>Importin subunit alpha-1</fullName>
    </recommendedName>
    <alternativeName>
        <fullName>Cell untimely torn protein 15</fullName>
    </alternativeName>
    <alternativeName>
        <fullName>Karyopherin subunit alpha-1</fullName>
    </alternativeName>
    <alternativeName>
        <fullName>Serine-rich RNA polymerase I suppressor protein</fullName>
    </alternativeName>
</protein>
<gene>
    <name type="primary">cut15</name>
    <name type="ORF">SPCC962.03c</name>
</gene>
<feature type="chain" id="PRO_0000120743" description="Importin subunit alpha-1">
    <location>
        <begin position="1"/>
        <end position="542"/>
    </location>
</feature>
<feature type="domain" description="IBB" evidence="1">
    <location>
        <begin position="1"/>
        <end position="60"/>
    </location>
</feature>
<feature type="repeat" description="ARM 1">
    <location>
        <begin position="114"/>
        <end position="155"/>
    </location>
</feature>
<feature type="repeat" description="ARM 2">
    <location>
        <begin position="156"/>
        <end position="197"/>
    </location>
</feature>
<feature type="repeat" description="ARM 3">
    <location>
        <begin position="198"/>
        <end position="240"/>
    </location>
</feature>
<feature type="repeat" description="ARM 4">
    <location>
        <begin position="241"/>
        <end position="282"/>
    </location>
</feature>
<feature type="repeat" description="ARM 5">
    <location>
        <begin position="283"/>
        <end position="324"/>
    </location>
</feature>
<feature type="repeat" description="ARM 6">
    <location>
        <begin position="325"/>
        <end position="366"/>
    </location>
</feature>
<feature type="repeat" description="ARM 7">
    <location>
        <begin position="367"/>
        <end position="408"/>
    </location>
</feature>
<feature type="repeat" description="ARM 8">
    <location>
        <begin position="409"/>
        <end position="453"/>
    </location>
</feature>
<feature type="region of interest" description="Disordered" evidence="2">
    <location>
        <begin position="1"/>
        <end position="29"/>
    </location>
</feature>
<dbReference type="EMBL" id="AB010574">
    <property type="protein sequence ID" value="BAA24518.1"/>
    <property type="molecule type" value="Genomic_DNA"/>
</dbReference>
<dbReference type="EMBL" id="CU329672">
    <property type="protein sequence ID" value="CAA20435.1"/>
    <property type="molecule type" value="Genomic_DNA"/>
</dbReference>
<dbReference type="EMBL" id="AB027972">
    <property type="protein sequence ID" value="BAA87276.1"/>
    <property type="molecule type" value="Genomic_DNA"/>
</dbReference>
<dbReference type="PIR" id="T41650">
    <property type="entry name" value="T41650"/>
</dbReference>
<dbReference type="RefSeq" id="NP_587868.1">
    <property type="nucleotide sequence ID" value="NM_001022860.2"/>
</dbReference>
<dbReference type="SMR" id="O14063"/>
<dbReference type="BioGRID" id="275991">
    <property type="interactions" value="16"/>
</dbReference>
<dbReference type="FunCoup" id="O14063">
    <property type="interactions" value="668"/>
</dbReference>
<dbReference type="IntAct" id="O14063">
    <property type="interactions" value="1"/>
</dbReference>
<dbReference type="STRING" id="284812.O14063"/>
<dbReference type="iPTMnet" id="O14063"/>
<dbReference type="PaxDb" id="4896-SPCC962.03c.1"/>
<dbReference type="EnsemblFungi" id="SPCC962.03c.1">
    <property type="protein sequence ID" value="SPCC962.03c.1:pep"/>
    <property type="gene ID" value="SPCC962.03c"/>
</dbReference>
<dbReference type="GeneID" id="2539426"/>
<dbReference type="KEGG" id="spo:2539426"/>
<dbReference type="PomBase" id="SPCC962.03c">
    <property type="gene designation" value="cut15"/>
</dbReference>
<dbReference type="VEuPathDB" id="FungiDB:SPCC962.03c"/>
<dbReference type="eggNOG" id="KOG0166">
    <property type="taxonomic scope" value="Eukaryota"/>
</dbReference>
<dbReference type="HOGENOM" id="CLU_018084_6_0_1"/>
<dbReference type="InParanoid" id="O14063"/>
<dbReference type="OMA" id="EMIQMLY"/>
<dbReference type="PhylomeDB" id="O14063"/>
<dbReference type="Reactome" id="R-SPO-68616">
    <property type="pathway name" value="Assembly of the ORC complex at the origin of replication"/>
</dbReference>
<dbReference type="PRO" id="PR:O14063"/>
<dbReference type="Proteomes" id="UP000002485">
    <property type="component" value="Chromosome III"/>
</dbReference>
<dbReference type="GO" id="GO:0005737">
    <property type="term" value="C:cytoplasm"/>
    <property type="evidence" value="ECO:0000266"/>
    <property type="project" value="PomBase"/>
</dbReference>
<dbReference type="GO" id="GO:0005635">
    <property type="term" value="C:nuclear envelope"/>
    <property type="evidence" value="ECO:0000314"/>
    <property type="project" value="PomBase"/>
</dbReference>
<dbReference type="GO" id="GO:0034399">
    <property type="term" value="C:nuclear periphery"/>
    <property type="evidence" value="ECO:0000314"/>
    <property type="project" value="PomBase"/>
</dbReference>
<dbReference type="GO" id="GO:0005654">
    <property type="term" value="C:nucleoplasm"/>
    <property type="evidence" value="ECO:0000314"/>
    <property type="project" value="PomBase"/>
</dbReference>
<dbReference type="GO" id="GO:0005634">
    <property type="term" value="C:nucleus"/>
    <property type="evidence" value="ECO:0000314"/>
    <property type="project" value="PomBase"/>
</dbReference>
<dbReference type="GO" id="GO:0061608">
    <property type="term" value="F:nuclear import signal receptor activity"/>
    <property type="evidence" value="ECO:0000314"/>
    <property type="project" value="PomBase"/>
</dbReference>
<dbReference type="GO" id="GO:0008139">
    <property type="term" value="F:nuclear localization sequence binding"/>
    <property type="evidence" value="ECO:0000314"/>
    <property type="project" value="PomBase"/>
</dbReference>
<dbReference type="GO" id="GO:0006607">
    <property type="term" value="P:NLS-bearing protein import into nucleus"/>
    <property type="evidence" value="ECO:0000318"/>
    <property type="project" value="GO_Central"/>
</dbReference>
<dbReference type="GO" id="GO:0006606">
    <property type="term" value="P:protein import into nucleus"/>
    <property type="evidence" value="ECO:0000314"/>
    <property type="project" value="PomBase"/>
</dbReference>
<dbReference type="FunFam" id="1.20.5.690:FF:000003">
    <property type="entry name" value="Importin subunit alpha"/>
    <property type="match status" value="1"/>
</dbReference>
<dbReference type="FunFam" id="1.25.10.10:FF:000021">
    <property type="entry name" value="Importin subunit alpha"/>
    <property type="match status" value="1"/>
</dbReference>
<dbReference type="Gene3D" id="1.20.5.690">
    <property type="entry name" value="Importin-alpha, importin-beta-binding domain"/>
    <property type="match status" value="1"/>
</dbReference>
<dbReference type="Gene3D" id="1.25.10.10">
    <property type="entry name" value="Leucine-rich Repeat Variant"/>
    <property type="match status" value="1"/>
</dbReference>
<dbReference type="InterPro" id="IPR011989">
    <property type="entry name" value="ARM-like"/>
</dbReference>
<dbReference type="InterPro" id="IPR016024">
    <property type="entry name" value="ARM-type_fold"/>
</dbReference>
<dbReference type="InterPro" id="IPR032413">
    <property type="entry name" value="Arm_3"/>
</dbReference>
<dbReference type="InterPro" id="IPR000225">
    <property type="entry name" value="Armadillo"/>
</dbReference>
<dbReference type="InterPro" id="IPR002652">
    <property type="entry name" value="Importin-a_IBB"/>
</dbReference>
<dbReference type="InterPro" id="IPR036975">
    <property type="entry name" value="Importin-a_IBB_sf"/>
</dbReference>
<dbReference type="InterPro" id="IPR024931">
    <property type="entry name" value="Importin_alpha"/>
</dbReference>
<dbReference type="PANTHER" id="PTHR23316">
    <property type="entry name" value="IMPORTIN ALPHA"/>
    <property type="match status" value="1"/>
</dbReference>
<dbReference type="Pfam" id="PF00514">
    <property type="entry name" value="Arm"/>
    <property type="match status" value="8"/>
</dbReference>
<dbReference type="Pfam" id="PF16186">
    <property type="entry name" value="Arm_3"/>
    <property type="match status" value="1"/>
</dbReference>
<dbReference type="Pfam" id="PF01749">
    <property type="entry name" value="IBB"/>
    <property type="match status" value="1"/>
</dbReference>
<dbReference type="PIRSF" id="PIRSF005673">
    <property type="entry name" value="Importin_alpha"/>
    <property type="match status" value="1"/>
</dbReference>
<dbReference type="SMART" id="SM00185">
    <property type="entry name" value="ARM"/>
    <property type="match status" value="8"/>
</dbReference>
<dbReference type="SUPFAM" id="SSF48371">
    <property type="entry name" value="ARM repeat"/>
    <property type="match status" value="1"/>
</dbReference>
<dbReference type="PROSITE" id="PS50176">
    <property type="entry name" value="ARM_REPEAT"/>
    <property type="match status" value="3"/>
</dbReference>
<dbReference type="PROSITE" id="PS51214">
    <property type="entry name" value="IBB"/>
    <property type="match status" value="1"/>
</dbReference>
<comment type="function">
    <text evidence="4 6">Binds specifically and directly to substrates containing either a simple or bipartite NLS motif. Promotes docking of import substrates to the nuclear envelope. Seems to act as a cytosolic receptor for both simple and bipartite NLS motifs. Has an essential role in mitotic chromosome condensation. Involved in nuclear protein import. Required for efficient nuclear import of both an SV40 nuclear localization signal-containing reporter protein and the pap1 component of the stress response MAP kinase pathway. Required for proper mitotic progression.</text>
</comment>
<comment type="subunit">
    <text evidence="4">Interacts with pap1.</text>
</comment>
<comment type="subcellular location">
    <subcellularLocation>
        <location evidence="3 4 5 6">Nucleus</location>
    </subcellularLocation>
</comment>
<comment type="similarity">
    <text evidence="7">Belongs to the importin alpha family.</text>
</comment>
<sequence>MSASSRFIPEHRRQNYKGKGTFQADELRRRRETQQIEIRKQKREENLNKRRNLVDVQEPAEETIPLEQDKENDLELELQLPDLLKALYSDDIEAQIQATAKFRKALSKETNPPIQKVIDAGVVPRFVEFLSHENNLLKFEASWALTNVASGSSNQTHVVVEANAVPVFVSLLSSSEQDVREQAVWALGNIAGDSPMCRDHVLQCGVLEPLLNIIESNRRLSMLRNSTWTLSNMCRGKNPQPDWNSISQVIPVLSKLIYTLDEDVLVDALWAISYLSDGANEKIQAIIDAGIPRRLVELLMHPSAQVQTPALRSVGNIVTGDDVQTQVIINCGALSALLSLLSSPRDGVRKEACWTISNITAGNSSQIQYVIEANIIPPLIHLLTTADFKIQKEACWAISNATSGGARRPDQIRYLVEQGAIKPLCNLLACQDNKIIQVALDGIENILRVGELDRANNPDKINLYAVYVEDAGGMDLIHECQNSSNSEIYQKAYNIIEKFFGEEDEIEELEPETVGDTFTFGTTQEPAGDFQFSATNAEDMAM</sequence>
<accession>O14063</accession>
<accession>Q9UTV5</accession>
<name>IMA1_SCHPO</name>
<proteinExistence type="evidence at protein level"/>
<keyword id="KW-0539">Nucleus</keyword>
<keyword id="KW-0653">Protein transport</keyword>
<keyword id="KW-1185">Reference proteome</keyword>
<keyword id="KW-0677">Repeat</keyword>
<keyword id="KW-0813">Transport</keyword>
<organism>
    <name type="scientific">Schizosaccharomyces pombe (strain 972 / ATCC 24843)</name>
    <name type="common">Fission yeast</name>
    <dbReference type="NCBI Taxonomy" id="284812"/>
    <lineage>
        <taxon>Eukaryota</taxon>
        <taxon>Fungi</taxon>
        <taxon>Dikarya</taxon>
        <taxon>Ascomycota</taxon>
        <taxon>Taphrinomycotina</taxon>
        <taxon>Schizosaccharomycetes</taxon>
        <taxon>Schizosaccharomycetales</taxon>
        <taxon>Schizosaccharomycetaceae</taxon>
        <taxon>Schizosaccharomyces</taxon>
    </lineage>
</organism>